<protein>
    <recommendedName>
        <fullName evidence="1">Flavin-dependent thymidylate synthase</fullName>
        <shortName evidence="1">FDTS</shortName>
        <ecNumber evidence="1">2.1.1.148</ecNumber>
    </recommendedName>
    <alternativeName>
        <fullName evidence="1">FAD-dependent thymidylate synthase</fullName>
    </alternativeName>
    <alternativeName>
        <fullName evidence="1">Thymidylate synthase ThyX</fullName>
        <shortName evidence="1">TS</shortName>
        <shortName evidence="1">TSase</shortName>
    </alternativeName>
</protein>
<keyword id="KW-0274">FAD</keyword>
<keyword id="KW-0285">Flavoprotein</keyword>
<keyword id="KW-0489">Methyltransferase</keyword>
<keyword id="KW-0521">NADP</keyword>
<keyword id="KW-0545">Nucleotide biosynthesis</keyword>
<keyword id="KW-0808">Transferase</keyword>
<reference key="1">
    <citation type="journal article" date="2001" name="Science">
        <title>Mechanisms of evolution in Rickettsia conorii and R. prowazekii.</title>
        <authorList>
            <person name="Ogata H."/>
            <person name="Audic S."/>
            <person name="Renesto-Audiffren P."/>
            <person name="Fournier P.-E."/>
            <person name="Barbe V."/>
            <person name="Samson D."/>
            <person name="Roux V."/>
            <person name="Cossart P."/>
            <person name="Weissenbach J."/>
            <person name="Claverie J.-M."/>
            <person name="Raoult D."/>
        </authorList>
    </citation>
    <scope>NUCLEOTIDE SEQUENCE [LARGE SCALE GENOMIC DNA]</scope>
    <source>
        <strain>ATCC VR-613 / Malish 7</strain>
    </source>
</reference>
<gene>
    <name evidence="1" type="primary">thyX</name>
    <name type="synonym">thyA</name>
    <name type="ordered locus">RC0405</name>
</gene>
<evidence type="ECO:0000255" key="1">
    <source>
        <dbReference type="HAMAP-Rule" id="MF_01408"/>
    </source>
</evidence>
<evidence type="ECO:0000255" key="2">
    <source>
        <dbReference type="PROSITE-ProRule" id="PRU00661"/>
    </source>
</evidence>
<dbReference type="EC" id="2.1.1.148" evidence="1"/>
<dbReference type="EMBL" id="AE006914">
    <property type="protein sequence ID" value="AAL02943.1"/>
    <property type="molecule type" value="Genomic_DNA"/>
</dbReference>
<dbReference type="PIR" id="E97750">
    <property type="entry name" value="E97750"/>
</dbReference>
<dbReference type="RefSeq" id="WP_004996155.1">
    <property type="nucleotide sequence ID" value="NC_003103.1"/>
</dbReference>
<dbReference type="SMR" id="Q92IL5"/>
<dbReference type="GeneID" id="95362075"/>
<dbReference type="KEGG" id="rco:RC0405"/>
<dbReference type="HOGENOM" id="CLU_067790_0_0_5"/>
<dbReference type="UniPathway" id="UPA00575"/>
<dbReference type="Proteomes" id="UP000000816">
    <property type="component" value="Chromosome"/>
</dbReference>
<dbReference type="GO" id="GO:0050660">
    <property type="term" value="F:flavin adenine dinucleotide binding"/>
    <property type="evidence" value="ECO:0007669"/>
    <property type="project" value="InterPro"/>
</dbReference>
<dbReference type="GO" id="GO:0070402">
    <property type="term" value="F:NADPH binding"/>
    <property type="evidence" value="ECO:0007669"/>
    <property type="project" value="TreeGrafter"/>
</dbReference>
<dbReference type="GO" id="GO:0050797">
    <property type="term" value="F:thymidylate synthase (FAD) activity"/>
    <property type="evidence" value="ECO:0007669"/>
    <property type="project" value="UniProtKB-UniRule"/>
</dbReference>
<dbReference type="GO" id="GO:0004799">
    <property type="term" value="F:thymidylate synthase activity"/>
    <property type="evidence" value="ECO:0007669"/>
    <property type="project" value="TreeGrafter"/>
</dbReference>
<dbReference type="GO" id="GO:0006231">
    <property type="term" value="P:dTMP biosynthetic process"/>
    <property type="evidence" value="ECO:0007669"/>
    <property type="project" value="UniProtKB-UniRule"/>
</dbReference>
<dbReference type="GO" id="GO:0006235">
    <property type="term" value="P:dTTP biosynthetic process"/>
    <property type="evidence" value="ECO:0007669"/>
    <property type="project" value="UniProtKB-UniRule"/>
</dbReference>
<dbReference type="GO" id="GO:0032259">
    <property type="term" value="P:methylation"/>
    <property type="evidence" value="ECO:0007669"/>
    <property type="project" value="UniProtKB-KW"/>
</dbReference>
<dbReference type="CDD" id="cd20175">
    <property type="entry name" value="ThyX"/>
    <property type="match status" value="1"/>
</dbReference>
<dbReference type="Gene3D" id="3.30.1360.170">
    <property type="match status" value="1"/>
</dbReference>
<dbReference type="HAMAP" id="MF_01408">
    <property type="entry name" value="ThyX"/>
    <property type="match status" value="1"/>
</dbReference>
<dbReference type="InterPro" id="IPR003669">
    <property type="entry name" value="Thymidylate_synthase_ThyX"/>
</dbReference>
<dbReference type="InterPro" id="IPR036098">
    <property type="entry name" value="Thymidylate_synthase_ThyX_sf"/>
</dbReference>
<dbReference type="NCBIfam" id="TIGR02170">
    <property type="entry name" value="thyX"/>
    <property type="match status" value="1"/>
</dbReference>
<dbReference type="PANTHER" id="PTHR34934">
    <property type="entry name" value="FLAVIN-DEPENDENT THYMIDYLATE SYNTHASE"/>
    <property type="match status" value="1"/>
</dbReference>
<dbReference type="PANTHER" id="PTHR34934:SF1">
    <property type="entry name" value="FLAVIN-DEPENDENT THYMIDYLATE SYNTHASE"/>
    <property type="match status" value="1"/>
</dbReference>
<dbReference type="Pfam" id="PF02511">
    <property type="entry name" value="Thy1"/>
    <property type="match status" value="1"/>
</dbReference>
<dbReference type="SUPFAM" id="SSF69796">
    <property type="entry name" value="Thymidylate synthase-complementing protein Thy1"/>
    <property type="match status" value="1"/>
</dbReference>
<dbReference type="PROSITE" id="PS51331">
    <property type="entry name" value="THYX"/>
    <property type="match status" value="1"/>
</dbReference>
<name>THYX_RICCN</name>
<accession>Q92IL5</accession>
<comment type="function">
    <text evidence="1">Catalyzes the reductive methylation of 2'-deoxyuridine-5'-monophosphate (dUMP) to 2'-deoxythymidine-5'-monophosphate (dTMP) while utilizing 5,10-methylenetetrahydrofolate (mTHF) as the methyl donor, and NADPH and FADH(2) as the reductant.</text>
</comment>
<comment type="catalytic activity">
    <reaction evidence="1">
        <text>dUMP + (6R)-5,10-methylene-5,6,7,8-tetrahydrofolate + NADPH + H(+) = dTMP + (6S)-5,6,7,8-tetrahydrofolate + NADP(+)</text>
        <dbReference type="Rhea" id="RHEA:29043"/>
        <dbReference type="ChEBI" id="CHEBI:15378"/>
        <dbReference type="ChEBI" id="CHEBI:15636"/>
        <dbReference type="ChEBI" id="CHEBI:57453"/>
        <dbReference type="ChEBI" id="CHEBI:57783"/>
        <dbReference type="ChEBI" id="CHEBI:58349"/>
        <dbReference type="ChEBI" id="CHEBI:63528"/>
        <dbReference type="ChEBI" id="CHEBI:246422"/>
        <dbReference type="EC" id="2.1.1.148"/>
    </reaction>
</comment>
<comment type="cofactor">
    <cofactor evidence="1">
        <name>FAD</name>
        <dbReference type="ChEBI" id="CHEBI:57692"/>
    </cofactor>
    <text evidence="1">Binds 4 FAD per tetramer. Each FAD binding site is formed by three monomers.</text>
</comment>
<comment type="pathway">
    <text evidence="1">Pyrimidine metabolism; dTTP biosynthesis.</text>
</comment>
<comment type="subunit">
    <text evidence="1">Homotetramer.</text>
</comment>
<comment type="similarity">
    <text evidence="1">Belongs to the thymidylate synthase ThyX family.</text>
</comment>
<proteinExistence type="inferred from homology"/>
<organism>
    <name type="scientific">Rickettsia conorii (strain ATCC VR-613 / Malish 7)</name>
    <dbReference type="NCBI Taxonomy" id="272944"/>
    <lineage>
        <taxon>Bacteria</taxon>
        <taxon>Pseudomonadati</taxon>
        <taxon>Pseudomonadota</taxon>
        <taxon>Alphaproteobacteria</taxon>
        <taxon>Rickettsiales</taxon>
        <taxon>Rickettsiaceae</taxon>
        <taxon>Rickettsieae</taxon>
        <taxon>Rickettsia</taxon>
        <taxon>spotted fever group</taxon>
    </lineage>
</organism>
<feature type="chain" id="PRO_0000175572" description="Flavin-dependent thymidylate synthase">
    <location>
        <begin position="1"/>
        <end position="294"/>
    </location>
</feature>
<feature type="domain" description="ThyX" evidence="2">
    <location>
        <begin position="27"/>
        <end position="250"/>
    </location>
</feature>
<feature type="short sequence motif" description="ThyX motif" evidence="1">
    <location>
        <begin position="96"/>
        <end position="106"/>
    </location>
</feature>
<feature type="active site" description="Involved in ionization of N3 of dUMP, leading to its activation" evidence="1">
    <location>
        <position position="216"/>
    </location>
</feature>
<feature type="binding site" evidence="1">
    <location>
        <position position="73"/>
    </location>
    <ligand>
        <name>FAD</name>
        <dbReference type="ChEBI" id="CHEBI:57692"/>
        <note>ligand shared between neighboring subunits</note>
    </ligand>
</feature>
<feature type="binding site" evidence="1">
    <location>
        <begin position="93"/>
        <end position="96"/>
    </location>
    <ligand>
        <name>dUMP</name>
        <dbReference type="ChEBI" id="CHEBI:246422"/>
        <note>ligand shared between dimeric partners</note>
    </ligand>
</feature>
<feature type="binding site" evidence="1">
    <location>
        <begin position="96"/>
        <end position="98"/>
    </location>
    <ligand>
        <name>FAD</name>
        <dbReference type="ChEBI" id="CHEBI:57692"/>
        <note>ligand shared between neighboring subunits</note>
    </ligand>
</feature>
<feature type="binding site" description="in other chain" evidence="1">
    <location>
        <begin position="104"/>
        <end position="108"/>
    </location>
    <ligand>
        <name>dUMP</name>
        <dbReference type="ChEBI" id="CHEBI:246422"/>
        <note>ligand shared between dimeric partners</note>
    </ligand>
</feature>
<feature type="binding site" evidence="1">
    <location>
        <position position="104"/>
    </location>
    <ligand>
        <name>FAD</name>
        <dbReference type="ChEBI" id="CHEBI:57692"/>
        <note>ligand shared between neighboring subunits</note>
    </ligand>
</feature>
<feature type="binding site" description="in other chain" evidence="1">
    <location>
        <position position="189"/>
    </location>
    <ligand>
        <name>dUMP</name>
        <dbReference type="ChEBI" id="CHEBI:246422"/>
        <note>ligand shared between dimeric partners</note>
    </ligand>
</feature>
<feature type="binding site" evidence="1">
    <location>
        <begin position="205"/>
        <end position="207"/>
    </location>
    <ligand>
        <name>FAD</name>
        <dbReference type="ChEBI" id="CHEBI:57692"/>
        <note>ligand shared between neighboring subunits</note>
    </ligand>
</feature>
<feature type="binding site" evidence="1">
    <location>
        <position position="211"/>
    </location>
    <ligand>
        <name>FAD</name>
        <dbReference type="ChEBI" id="CHEBI:57692"/>
        <note>ligand shared between neighboring subunits</note>
    </ligand>
</feature>
<feature type="binding site" evidence="1">
    <location>
        <position position="216"/>
    </location>
    <ligand>
        <name>dUMP</name>
        <dbReference type="ChEBI" id="CHEBI:246422"/>
        <note>ligand shared between dimeric partners</note>
    </ligand>
</feature>
<sequence>MHNTTKRVTVPALEEILYEPIKVLDYGFIRVIDYMGDDSAIVQAARVSYGKGTKQLNQDKGLINYLLRHYHTTPFEMCDIKFHIKLPIFIARQWIRHRTASVNEYSARYSILGNEFYLPEPANIASQSAVNKQCREGDSLPKEVAEKVLAILEEDARQCYGHYKELMNADEEGNIIDENATGIARELARMNLTLNYYTEWYWKINLHNLLHFLRLRADPHAQYEIRVYAEKMLEIVKAWVPFVYEAFEEYRLQGANISRKGLDVIKRMINGEKVTHETSDMTKREWEELMKIFG</sequence>